<gene>
    <name type="ordered locus">Os04g0179200</name>
    <name type="ordered locus">LOC_Os04g10010</name>
    <name type="ORF">OsJ_13988</name>
    <name type="ORF">OSJNBa0052P16.9</name>
</gene>
<accession>Q7FAE1</accession>
<accession>A3ARJ5</accession>
<reference key="1">
    <citation type="journal article" date="2002" name="Nature">
        <title>Sequence and analysis of rice chromosome 4.</title>
        <authorList>
            <person name="Feng Q."/>
            <person name="Zhang Y."/>
            <person name="Hao P."/>
            <person name="Wang S."/>
            <person name="Fu G."/>
            <person name="Huang Y."/>
            <person name="Li Y."/>
            <person name="Zhu J."/>
            <person name="Liu Y."/>
            <person name="Hu X."/>
            <person name="Jia P."/>
            <person name="Zhang Y."/>
            <person name="Zhao Q."/>
            <person name="Ying K."/>
            <person name="Yu S."/>
            <person name="Tang Y."/>
            <person name="Weng Q."/>
            <person name="Zhang L."/>
            <person name="Lu Y."/>
            <person name="Mu J."/>
            <person name="Lu Y."/>
            <person name="Zhang L.S."/>
            <person name="Yu Z."/>
            <person name="Fan D."/>
            <person name="Liu X."/>
            <person name="Lu T."/>
            <person name="Li C."/>
            <person name="Wu Y."/>
            <person name="Sun T."/>
            <person name="Lei H."/>
            <person name="Li T."/>
            <person name="Hu H."/>
            <person name="Guan J."/>
            <person name="Wu M."/>
            <person name="Zhang R."/>
            <person name="Zhou B."/>
            <person name="Chen Z."/>
            <person name="Chen L."/>
            <person name="Jin Z."/>
            <person name="Wang R."/>
            <person name="Yin H."/>
            <person name="Cai Z."/>
            <person name="Ren S."/>
            <person name="Lv G."/>
            <person name="Gu W."/>
            <person name="Zhu G."/>
            <person name="Tu Y."/>
            <person name="Jia J."/>
            <person name="Zhang Y."/>
            <person name="Chen J."/>
            <person name="Kang H."/>
            <person name="Chen X."/>
            <person name="Shao C."/>
            <person name="Sun Y."/>
            <person name="Hu Q."/>
            <person name="Zhang X."/>
            <person name="Zhang W."/>
            <person name="Wang L."/>
            <person name="Ding C."/>
            <person name="Sheng H."/>
            <person name="Gu J."/>
            <person name="Chen S."/>
            <person name="Ni L."/>
            <person name="Zhu F."/>
            <person name="Chen W."/>
            <person name="Lan L."/>
            <person name="Lai Y."/>
            <person name="Cheng Z."/>
            <person name="Gu M."/>
            <person name="Jiang J."/>
            <person name="Li J."/>
            <person name="Hong G."/>
            <person name="Xue Y."/>
            <person name="Han B."/>
        </authorList>
    </citation>
    <scope>NUCLEOTIDE SEQUENCE [LARGE SCALE GENOMIC DNA]</scope>
    <source>
        <strain>cv. Nipponbare</strain>
    </source>
</reference>
<reference key="2">
    <citation type="journal article" date="2005" name="Nature">
        <title>The map-based sequence of the rice genome.</title>
        <authorList>
            <consortium name="International rice genome sequencing project (IRGSP)"/>
        </authorList>
    </citation>
    <scope>NUCLEOTIDE SEQUENCE [LARGE SCALE GENOMIC DNA]</scope>
    <source>
        <strain>cv. Nipponbare</strain>
    </source>
</reference>
<reference key="3">
    <citation type="journal article" date="2008" name="Nucleic Acids Res.">
        <title>The rice annotation project database (RAP-DB): 2008 update.</title>
        <authorList>
            <consortium name="The rice annotation project (RAP)"/>
        </authorList>
    </citation>
    <scope>GENOME REANNOTATION</scope>
    <source>
        <strain>cv. Nipponbare</strain>
    </source>
</reference>
<reference key="4">
    <citation type="journal article" date="2013" name="Rice">
        <title>Improvement of the Oryza sativa Nipponbare reference genome using next generation sequence and optical map data.</title>
        <authorList>
            <person name="Kawahara Y."/>
            <person name="de la Bastide M."/>
            <person name="Hamilton J.P."/>
            <person name="Kanamori H."/>
            <person name="McCombie W.R."/>
            <person name="Ouyang S."/>
            <person name="Schwartz D.C."/>
            <person name="Tanaka T."/>
            <person name="Wu J."/>
            <person name="Zhou S."/>
            <person name="Childs K.L."/>
            <person name="Davidson R.M."/>
            <person name="Lin H."/>
            <person name="Quesada-Ocampo L."/>
            <person name="Vaillancourt B."/>
            <person name="Sakai H."/>
            <person name="Lee S.S."/>
            <person name="Kim J."/>
            <person name="Numa H."/>
            <person name="Itoh T."/>
            <person name="Buell C.R."/>
            <person name="Matsumoto T."/>
        </authorList>
    </citation>
    <scope>GENOME REANNOTATION</scope>
    <source>
        <strain>cv. Nipponbare</strain>
    </source>
</reference>
<reference key="5">
    <citation type="journal article" date="2005" name="PLoS Biol.">
        <title>The genomes of Oryza sativa: a history of duplications.</title>
        <authorList>
            <person name="Yu J."/>
            <person name="Wang J."/>
            <person name="Lin W."/>
            <person name="Li S."/>
            <person name="Li H."/>
            <person name="Zhou J."/>
            <person name="Ni P."/>
            <person name="Dong W."/>
            <person name="Hu S."/>
            <person name="Zeng C."/>
            <person name="Zhang J."/>
            <person name="Zhang Y."/>
            <person name="Li R."/>
            <person name="Xu Z."/>
            <person name="Li S."/>
            <person name="Li X."/>
            <person name="Zheng H."/>
            <person name="Cong L."/>
            <person name="Lin L."/>
            <person name="Yin J."/>
            <person name="Geng J."/>
            <person name="Li G."/>
            <person name="Shi J."/>
            <person name="Liu J."/>
            <person name="Lv H."/>
            <person name="Li J."/>
            <person name="Wang J."/>
            <person name="Deng Y."/>
            <person name="Ran L."/>
            <person name="Shi X."/>
            <person name="Wang X."/>
            <person name="Wu Q."/>
            <person name="Li C."/>
            <person name="Ren X."/>
            <person name="Wang J."/>
            <person name="Wang X."/>
            <person name="Li D."/>
            <person name="Liu D."/>
            <person name="Zhang X."/>
            <person name="Ji Z."/>
            <person name="Zhao W."/>
            <person name="Sun Y."/>
            <person name="Zhang Z."/>
            <person name="Bao J."/>
            <person name="Han Y."/>
            <person name="Dong L."/>
            <person name="Ji J."/>
            <person name="Chen P."/>
            <person name="Wu S."/>
            <person name="Liu J."/>
            <person name="Xiao Y."/>
            <person name="Bu D."/>
            <person name="Tan J."/>
            <person name="Yang L."/>
            <person name="Ye C."/>
            <person name="Zhang J."/>
            <person name="Xu J."/>
            <person name="Zhou Y."/>
            <person name="Yu Y."/>
            <person name="Zhang B."/>
            <person name="Zhuang S."/>
            <person name="Wei H."/>
            <person name="Liu B."/>
            <person name="Lei M."/>
            <person name="Yu H."/>
            <person name="Li Y."/>
            <person name="Xu H."/>
            <person name="Wei S."/>
            <person name="He X."/>
            <person name="Fang L."/>
            <person name="Zhang Z."/>
            <person name="Zhang Y."/>
            <person name="Huang X."/>
            <person name="Su Z."/>
            <person name="Tong W."/>
            <person name="Li J."/>
            <person name="Tong Z."/>
            <person name="Li S."/>
            <person name="Ye J."/>
            <person name="Wang L."/>
            <person name="Fang L."/>
            <person name="Lei T."/>
            <person name="Chen C.-S."/>
            <person name="Chen H.-C."/>
            <person name="Xu Z."/>
            <person name="Li H."/>
            <person name="Huang H."/>
            <person name="Zhang F."/>
            <person name="Xu H."/>
            <person name="Li N."/>
            <person name="Zhao C."/>
            <person name="Li S."/>
            <person name="Dong L."/>
            <person name="Huang Y."/>
            <person name="Li L."/>
            <person name="Xi Y."/>
            <person name="Qi Q."/>
            <person name="Li W."/>
            <person name="Zhang B."/>
            <person name="Hu W."/>
            <person name="Zhang Y."/>
            <person name="Tian X."/>
            <person name="Jiao Y."/>
            <person name="Liang X."/>
            <person name="Jin J."/>
            <person name="Gao L."/>
            <person name="Zheng W."/>
            <person name="Hao B."/>
            <person name="Liu S.-M."/>
            <person name="Wang W."/>
            <person name="Yuan L."/>
            <person name="Cao M."/>
            <person name="McDermott J."/>
            <person name="Samudrala R."/>
            <person name="Wang J."/>
            <person name="Wong G.K.-S."/>
            <person name="Yang H."/>
        </authorList>
    </citation>
    <scope>NUCLEOTIDE SEQUENCE [LARGE SCALE GENOMIC DNA]</scope>
    <source>
        <strain>cv. Nipponbare</strain>
    </source>
</reference>
<reference key="6">
    <citation type="journal article" date="2003" name="Science">
        <title>Collection, mapping, and annotation of over 28,000 cDNA clones from japonica rice.</title>
        <authorList>
            <consortium name="The rice full-length cDNA consortium"/>
        </authorList>
    </citation>
    <scope>NUCLEOTIDE SEQUENCE [LARGE SCALE MRNA]</scope>
    <source>
        <strain>cv. Nipponbare</strain>
    </source>
</reference>
<reference key="7">
    <citation type="journal article" date="2002" name="Biosci. Biotechnol. Biochem.">
        <title>Biosynthesis of rice phytoalexin: enzymatic conversion of 3beta-hydroxy-9beta-pimara-7,15-dien-19,6beta-olide to momilactone A.</title>
        <authorList>
            <person name="Atawong A."/>
            <person name="Hasegawa M."/>
            <person name="Kodama O."/>
        </authorList>
    </citation>
    <scope>INDUCTION</scope>
</reference>
<reference key="8">
    <citation type="journal article" date="2007" name="J. Biol. Chem.">
        <title>Identification of a biosynthetic gene cluster in rice for momilactones.</title>
        <authorList>
            <person name="Shimura K."/>
            <person name="Okada A."/>
            <person name="Okada K."/>
            <person name="Jikumaru Y."/>
            <person name="Ko K.-W."/>
            <person name="Toyomasu T."/>
            <person name="Sassa T."/>
            <person name="Hasegawa M."/>
            <person name="Kodama O."/>
            <person name="Shibuya N."/>
            <person name="Koga J."/>
            <person name="Nojiri H."/>
            <person name="Yamane H."/>
        </authorList>
    </citation>
    <scope>FUNCTION</scope>
    <scope>INDUCTION</scope>
</reference>
<organism>
    <name type="scientific">Oryza sativa subsp. japonica</name>
    <name type="common">Rice</name>
    <dbReference type="NCBI Taxonomy" id="39947"/>
    <lineage>
        <taxon>Eukaryota</taxon>
        <taxon>Viridiplantae</taxon>
        <taxon>Streptophyta</taxon>
        <taxon>Embryophyta</taxon>
        <taxon>Tracheophyta</taxon>
        <taxon>Spermatophyta</taxon>
        <taxon>Magnoliopsida</taxon>
        <taxon>Liliopsida</taxon>
        <taxon>Poales</taxon>
        <taxon>Poaceae</taxon>
        <taxon>BOP clade</taxon>
        <taxon>Oryzoideae</taxon>
        <taxon>Oryzeae</taxon>
        <taxon>Oryzinae</taxon>
        <taxon>Oryza</taxon>
        <taxon>Oryza sativa</taxon>
    </lineage>
</organism>
<sequence length="274" mass="27833">MAAGSSHVSADARKLVGKVAVITGGASGIGACTARLFVKHGARVVVADIQDELGASLVAELGPDASSYVHCDVTNEGDVAAAVDHAVARFGKLDVMFNNAGVSGPPCFRMSECTKEDFERVLAVNLVGPFLGTKHAARVMAPARRGSIISTASLSSSVSGAASHAYTTSKHALVGFTENAAGELGRHGIRVNCVSPAGVATPLARAAMGMDDEAIEAIMANSANLKGAGALKADDIAAAALFLASDDGRYVSGQNLRVDGGLSVVNSSFGFFRD</sequence>
<dbReference type="EC" id="1.1.1.295"/>
<dbReference type="EMBL" id="AL662936">
    <property type="protein sequence ID" value="CAD39722.3"/>
    <property type="molecule type" value="Genomic_DNA"/>
</dbReference>
<dbReference type="EMBL" id="AP008210">
    <property type="protein sequence ID" value="BAF14088.1"/>
    <property type="molecule type" value="Genomic_DNA"/>
</dbReference>
<dbReference type="EMBL" id="AP014960">
    <property type="protein sequence ID" value="BAS87952.1"/>
    <property type="molecule type" value="Genomic_DNA"/>
</dbReference>
<dbReference type="EMBL" id="CM000141">
    <property type="protein sequence ID" value="EAZ29934.1"/>
    <property type="molecule type" value="Genomic_DNA"/>
</dbReference>
<dbReference type="EMBL" id="AK103462">
    <property type="protein sequence ID" value="BAG96093.1"/>
    <property type="molecule type" value="mRNA"/>
</dbReference>
<dbReference type="EMBL" id="AK106087">
    <property type="protein sequence ID" value="BAG97558.1"/>
    <property type="molecule type" value="mRNA"/>
</dbReference>
<dbReference type="RefSeq" id="XP_015634207.1">
    <property type="nucleotide sequence ID" value="XM_015778721.1"/>
</dbReference>
<dbReference type="SMR" id="Q7FAE1"/>
<dbReference type="FunCoup" id="Q7FAE1">
    <property type="interactions" value="70"/>
</dbReference>
<dbReference type="STRING" id="39947.Q7FAE1"/>
<dbReference type="PaxDb" id="39947-Q7FAE1"/>
<dbReference type="EnsemblPlants" id="Os04t0179200-01">
    <property type="protein sequence ID" value="Os04t0179200-01"/>
    <property type="gene ID" value="Os04g0179200"/>
</dbReference>
<dbReference type="Gramene" id="Os04t0179200-01">
    <property type="protein sequence ID" value="Os04t0179200-01"/>
    <property type="gene ID" value="Os04g0179200"/>
</dbReference>
<dbReference type="KEGG" id="dosa:Os04g0179200"/>
<dbReference type="eggNOG" id="KOG0725">
    <property type="taxonomic scope" value="Eukaryota"/>
</dbReference>
<dbReference type="HOGENOM" id="CLU_010194_1_0_1"/>
<dbReference type="InParanoid" id="Q7FAE1"/>
<dbReference type="OMA" id="SIMLLHP"/>
<dbReference type="OrthoDB" id="1933718at2759"/>
<dbReference type="BioCyc" id="MetaCyc:MONOMER-13863"/>
<dbReference type="BRENDA" id="1.1.1.295">
    <property type="organism ID" value="4460"/>
</dbReference>
<dbReference type="PlantReactome" id="R-OSA-1119308">
    <property type="pathway name" value="Momilactone biosynthesis"/>
</dbReference>
<dbReference type="Proteomes" id="UP000000763">
    <property type="component" value="Chromosome 4"/>
</dbReference>
<dbReference type="Proteomes" id="UP000007752">
    <property type="component" value="Chromosome 4"/>
</dbReference>
<dbReference type="Proteomes" id="UP000059680">
    <property type="component" value="Chromosome 4"/>
</dbReference>
<dbReference type="ExpressionAtlas" id="Q7FAE1">
    <property type="expression patterns" value="baseline and differential"/>
</dbReference>
<dbReference type="GO" id="GO:0102960">
    <property type="term" value="F:momilactone-A synthase activity"/>
    <property type="evidence" value="ECO:0007669"/>
    <property type="project" value="UniProtKB-EC"/>
</dbReference>
<dbReference type="CDD" id="cd05326">
    <property type="entry name" value="secoisolariciresinol-DH_like_SDR_c"/>
    <property type="match status" value="1"/>
</dbReference>
<dbReference type="FunFam" id="3.40.50.720:FF:000084">
    <property type="entry name" value="Short-chain dehydrogenase reductase"/>
    <property type="match status" value="1"/>
</dbReference>
<dbReference type="Gene3D" id="3.40.50.720">
    <property type="entry name" value="NAD(P)-binding Rossmann-like Domain"/>
    <property type="match status" value="1"/>
</dbReference>
<dbReference type="InterPro" id="IPR045309">
    <property type="entry name" value="ABA2-like"/>
</dbReference>
<dbReference type="InterPro" id="IPR036291">
    <property type="entry name" value="NAD(P)-bd_dom_sf"/>
</dbReference>
<dbReference type="InterPro" id="IPR020904">
    <property type="entry name" value="Sc_DH/Rdtase_CS"/>
</dbReference>
<dbReference type="InterPro" id="IPR002347">
    <property type="entry name" value="SDR_fam"/>
</dbReference>
<dbReference type="NCBIfam" id="NF005559">
    <property type="entry name" value="PRK07231.1"/>
    <property type="match status" value="1"/>
</dbReference>
<dbReference type="PANTHER" id="PTHR43180">
    <property type="entry name" value="3-OXOACYL-(ACYL-CARRIER-PROTEIN) REDUCTASE (AFU_ORTHOLOGUE AFUA_6G11210)"/>
    <property type="match status" value="1"/>
</dbReference>
<dbReference type="PANTHER" id="PTHR43180:SF30">
    <property type="entry name" value="MOMILACTONE A SYNTHASE"/>
    <property type="match status" value="1"/>
</dbReference>
<dbReference type="Pfam" id="PF13561">
    <property type="entry name" value="adh_short_C2"/>
    <property type="match status" value="1"/>
</dbReference>
<dbReference type="PRINTS" id="PR00081">
    <property type="entry name" value="GDHRDH"/>
</dbReference>
<dbReference type="PRINTS" id="PR00080">
    <property type="entry name" value="SDRFAMILY"/>
</dbReference>
<dbReference type="SUPFAM" id="SSF51735">
    <property type="entry name" value="NAD(P)-binding Rossmann-fold domains"/>
    <property type="match status" value="1"/>
</dbReference>
<dbReference type="PROSITE" id="PS00061">
    <property type="entry name" value="ADH_SHORT"/>
    <property type="match status" value="1"/>
</dbReference>
<comment type="function">
    <text evidence="2">Involved in momilactone phytoalexins biosynthesis. Catalyzes the last step of momilactone A biosynthesis.</text>
</comment>
<comment type="catalytic activity">
    <reaction>
        <text>3beta-hydroxy-9beta-pimara-7,15-dien-19,6beta-olide + NAD(+) = momilactone A + NADH + H(+)</text>
        <dbReference type="Rhea" id="RHEA:25363"/>
        <dbReference type="ChEBI" id="CHEBI:15378"/>
        <dbReference type="ChEBI" id="CHEBI:49191"/>
        <dbReference type="ChEBI" id="CHEBI:49195"/>
        <dbReference type="ChEBI" id="CHEBI:57540"/>
        <dbReference type="ChEBI" id="CHEBI:57945"/>
        <dbReference type="EC" id="1.1.1.295"/>
    </reaction>
</comment>
<comment type="catalytic activity">
    <reaction>
        <text>3beta-hydroxy-9beta-pimara-7,15-dien-19,6beta-olide + NADP(+) = momilactone A + NADPH + H(+)</text>
        <dbReference type="Rhea" id="RHEA:25367"/>
        <dbReference type="ChEBI" id="CHEBI:15378"/>
        <dbReference type="ChEBI" id="CHEBI:49191"/>
        <dbReference type="ChEBI" id="CHEBI:49195"/>
        <dbReference type="ChEBI" id="CHEBI:57783"/>
        <dbReference type="ChEBI" id="CHEBI:58349"/>
        <dbReference type="EC" id="1.1.1.295"/>
    </reaction>
</comment>
<comment type="induction">
    <text evidence="1 2">By chitin oligosaccharide elicitor and UV irradiation.</text>
</comment>
<comment type="miscellaneous">
    <text>The phytoalexins momilactones A and B are diterpenoid secondary metabolites involved in the defense mechanism of the plant and produced in response to attack (by a pathogen, elicitor or UV irradiation). Momilactone B can also act as an allochemical (an antimicrobial and allelopathic agent), being constitutively produced in the root of the plant and secreted to the rhizosphere where it suppresses the growth of neighboring plants and soil microorganisms.</text>
</comment>
<comment type="similarity">
    <text evidence="3">Belongs to the short-chain dehydrogenases/reductases (SDR) family.</text>
</comment>
<keyword id="KW-0520">NAD</keyword>
<keyword id="KW-0521">NADP</keyword>
<keyword id="KW-0560">Oxidoreductase</keyword>
<keyword id="KW-1185">Reference proteome</keyword>
<feature type="chain" id="PRO_0000372311" description="Momilactone A synthase">
    <location>
        <begin position="1"/>
        <end position="274"/>
    </location>
</feature>
<feature type="sequence conflict" description="In Ref. 5; EAZ29934." evidence="3" ref="5">
    <original>N</original>
    <variation>Y</variation>
    <location>
        <position position="125"/>
    </location>
</feature>
<feature type="sequence conflict" description="In Ref. 5; EAZ29934." evidence="3" ref="5">
    <original>H</original>
    <variation>N</variation>
    <location>
        <position position="164"/>
    </location>
</feature>
<evidence type="ECO:0000269" key="1">
    <source>
    </source>
</evidence>
<evidence type="ECO:0000269" key="2">
    <source>
    </source>
</evidence>
<evidence type="ECO:0000305" key="3"/>
<protein>
    <recommendedName>
        <fullName>Momilactone A synthase</fullName>
        <shortName>OsMAS</shortName>
        <ecNumber>1.1.1.295</ecNumber>
    </recommendedName>
</protein>
<name>MOMAS_ORYSJ</name>
<proteinExistence type="evidence at transcript level"/>